<organism>
    <name type="scientific">Canis lupus familiaris</name>
    <name type="common">Dog</name>
    <name type="synonym">Canis familiaris</name>
    <dbReference type="NCBI Taxonomy" id="9615"/>
    <lineage>
        <taxon>Eukaryota</taxon>
        <taxon>Metazoa</taxon>
        <taxon>Chordata</taxon>
        <taxon>Craniata</taxon>
        <taxon>Vertebrata</taxon>
        <taxon>Euteleostomi</taxon>
        <taxon>Mammalia</taxon>
        <taxon>Eutheria</taxon>
        <taxon>Laurasiatheria</taxon>
        <taxon>Carnivora</taxon>
        <taxon>Caniformia</taxon>
        <taxon>Canidae</taxon>
        <taxon>Canis</taxon>
    </lineage>
</organism>
<comment type="function">
    <text evidence="2">Component of the subcortical maternal complex (SCMC), a multiprotein complex that plays a key role in early embryonic development. The SCMC complex is a structural constituent of cytoplasmic lattices, which consist in fibrous structures found in the cytoplasm of oocytes and preimplantation embryos. They are required to store maternal proteins critical for embryonic development, such as proteins that control epigenetic reprogramming of the preimplantation embryo, and prevent their degradation or activation. As part of the OOEP-KHDC3 scaffold, recruits BLM and TRIM25 to DNA replication forks, thereby promoting the ubiquitination of BLM by TRIM25, enhancing BLM retainment at replication forks and therefore promoting stalled replication fork restart. Positively regulates the homologous recombination-mediated DNA double-strand break (DSB) repair pathway by regulating ATM activation and RAD51 recruitment to DSBs in oocytes. Thereby contributes to oocyte survival and the resumption and completion of meiosis.</text>
</comment>
<comment type="subunit">
    <text evidence="1 2">Component of the subcortical maternal complex (SCMC), at least composed of NLRP5, KHDC3, OOEP, and TLE6 (By similarity). Within the complex, interacts with NLRP5, KHDC3 and TLE6 (By similarity). As part of the SCMC interacts with the SCMC-associated protein NLRP4F (By similarity). The SCMC may facilitate translocation of its components between the nuclear and cytoplasmic compartments (By similarity). Forms a scaffold complex with KHDC3/FILIA, and interacts with BLM and TRIM25 at DNA replication forks (By similarity).</text>
</comment>
<comment type="subcellular location">
    <subcellularLocation>
        <location evidence="2">Cytoplasm</location>
    </subcellularLocation>
    <subcellularLocation>
        <location evidence="2">Nucleus</location>
    </subcellularLocation>
    <text evidence="2">Core component of cytoplasmic lattices in oocytes. In the subcortical cytoplasm of early embryos from the 1-cell to the blastocyst stages. From the 2-cell stage, still detected in the subcortex, but excluded from cell-cell contact regions. Expression largely disappears in blastocysts.</text>
</comment>
<comment type="domain">
    <text>Contains an atypical KH domain with amino acid changes at critical sites, suggesting that it may not bind RNA.</text>
</comment>
<comment type="similarity">
    <text evidence="3">Belongs to the KHDC1 family.</text>
</comment>
<gene>
    <name type="primary">OOEP</name>
    <name type="synonym">OEP19</name>
</gene>
<dbReference type="EMBL" id="DQ470473">
    <property type="protein sequence ID" value="ABF13465.1"/>
    <property type="molecule type" value="mRNA"/>
</dbReference>
<dbReference type="RefSeq" id="NP_001106928.1">
    <property type="nucleotide sequence ID" value="NM_001113457.1"/>
</dbReference>
<dbReference type="SMR" id="Q0ZFW8"/>
<dbReference type="FunCoup" id="Q0ZFW8">
    <property type="interactions" value="2"/>
</dbReference>
<dbReference type="STRING" id="9615.ENSCAFP00000033796"/>
<dbReference type="PaxDb" id="9612-ENSCAFP00000033796"/>
<dbReference type="Ensembl" id="ENSCAFT00000038122.4">
    <property type="protein sequence ID" value="ENSCAFP00000033796.2"/>
    <property type="gene ID" value="ENSCAFG00000024700.4"/>
</dbReference>
<dbReference type="Ensembl" id="ENSCAFT00030025423.1">
    <property type="protein sequence ID" value="ENSCAFP00030022200.1"/>
    <property type="gene ID" value="ENSCAFG00030013739.1"/>
</dbReference>
<dbReference type="Ensembl" id="ENSCAFT00040032918.1">
    <property type="protein sequence ID" value="ENSCAFP00040028643.1"/>
    <property type="gene ID" value="ENSCAFG00040017820.1"/>
</dbReference>
<dbReference type="Ensembl" id="ENSCAFT00845021225.1">
    <property type="protein sequence ID" value="ENSCAFP00845016689.1"/>
    <property type="gene ID" value="ENSCAFG00845011927.1"/>
</dbReference>
<dbReference type="GeneID" id="474966"/>
<dbReference type="KEGG" id="cfa:474966"/>
<dbReference type="CTD" id="441161"/>
<dbReference type="VEuPathDB" id="HostDB:ENSCAFG00845011927"/>
<dbReference type="VGNC" id="VGNC:44125">
    <property type="gene designation" value="OOEP"/>
</dbReference>
<dbReference type="eggNOG" id="ENOG502RU0M">
    <property type="taxonomic scope" value="Eukaryota"/>
</dbReference>
<dbReference type="GeneTree" id="ENSGT00940000162097"/>
<dbReference type="HOGENOM" id="CLU_146793_0_0_1"/>
<dbReference type="InParanoid" id="Q0ZFW8"/>
<dbReference type="OMA" id="RVRPWWF"/>
<dbReference type="OrthoDB" id="9533079at2759"/>
<dbReference type="TreeFam" id="TF338690"/>
<dbReference type="Proteomes" id="UP000002254">
    <property type="component" value="Chromosome 12"/>
</dbReference>
<dbReference type="Proteomes" id="UP000694429">
    <property type="component" value="Chromosome 12"/>
</dbReference>
<dbReference type="Proteomes" id="UP000694542">
    <property type="component" value="Chromosome 12"/>
</dbReference>
<dbReference type="Proteomes" id="UP000805418">
    <property type="component" value="Chromosome 12"/>
</dbReference>
<dbReference type="Bgee" id="ENSCAFG00000024700">
    <property type="expression patterns" value="Expressed in placenta and 47 other cell types or tissues"/>
</dbReference>
<dbReference type="GO" id="GO:0005938">
    <property type="term" value="C:cell cortex"/>
    <property type="evidence" value="ECO:0000250"/>
    <property type="project" value="UniProtKB"/>
</dbReference>
<dbReference type="GO" id="GO:0005737">
    <property type="term" value="C:cytoplasm"/>
    <property type="evidence" value="ECO:0000250"/>
    <property type="project" value="UniProtKB"/>
</dbReference>
<dbReference type="GO" id="GO:0140095">
    <property type="term" value="C:cytoplasmic lattice"/>
    <property type="evidence" value="ECO:0000250"/>
    <property type="project" value="UniProtKB"/>
</dbReference>
<dbReference type="GO" id="GO:0005634">
    <property type="term" value="C:nucleus"/>
    <property type="evidence" value="ECO:0000250"/>
    <property type="project" value="UniProtKB"/>
</dbReference>
<dbReference type="GO" id="GO:0032991">
    <property type="term" value="C:protein-containing complex"/>
    <property type="evidence" value="ECO:0000318"/>
    <property type="project" value="GO_Central"/>
</dbReference>
<dbReference type="GO" id="GO:0003723">
    <property type="term" value="F:RNA binding"/>
    <property type="evidence" value="ECO:0000318"/>
    <property type="project" value="GO_Central"/>
</dbReference>
<dbReference type="GO" id="GO:0140094">
    <property type="term" value="F:structural constituent of cytoplasmic lattice"/>
    <property type="evidence" value="ECO:0000250"/>
    <property type="project" value="UniProtKB"/>
</dbReference>
<dbReference type="GO" id="GO:0007015">
    <property type="term" value="P:actin filament organization"/>
    <property type="evidence" value="ECO:0000250"/>
    <property type="project" value="UniProtKB"/>
</dbReference>
<dbReference type="GO" id="GO:0009880">
    <property type="term" value="P:embryonic pattern specification"/>
    <property type="evidence" value="ECO:0000318"/>
    <property type="project" value="GO_Central"/>
</dbReference>
<dbReference type="GO" id="GO:0051293">
    <property type="term" value="P:establishment of spindle localization"/>
    <property type="evidence" value="ECO:0000250"/>
    <property type="project" value="UniProtKB"/>
</dbReference>
<dbReference type="GO" id="GO:0035088">
    <property type="term" value="P:establishment or maintenance of apical/basal cell polarity"/>
    <property type="evidence" value="ECO:0000318"/>
    <property type="project" value="GO_Central"/>
</dbReference>
<dbReference type="GO" id="GO:2000781">
    <property type="term" value="P:positive regulation of double-strand break repair"/>
    <property type="evidence" value="ECO:0000250"/>
    <property type="project" value="UniProtKB"/>
</dbReference>
<dbReference type="GO" id="GO:1905168">
    <property type="term" value="P:positive regulation of double-strand break repair via homologous recombination"/>
    <property type="evidence" value="ECO:0000250"/>
    <property type="project" value="UniProtKB"/>
</dbReference>
<dbReference type="GO" id="GO:0045836">
    <property type="term" value="P:positive regulation of meiotic nuclear division"/>
    <property type="evidence" value="ECO:0000250"/>
    <property type="project" value="UniProtKB"/>
</dbReference>
<dbReference type="GO" id="GO:0140089">
    <property type="term" value="P:protein storage"/>
    <property type="evidence" value="ECO:0000250"/>
    <property type="project" value="UniProtKB"/>
</dbReference>
<dbReference type="GO" id="GO:0051302">
    <property type="term" value="P:regulation of cell division"/>
    <property type="evidence" value="ECO:0000250"/>
    <property type="project" value="UniProtKB"/>
</dbReference>
<dbReference type="GO" id="GO:0070201">
    <property type="term" value="P:regulation of establishment of protein localization"/>
    <property type="evidence" value="ECO:0000250"/>
    <property type="project" value="UniProtKB"/>
</dbReference>
<dbReference type="GO" id="GO:0032880">
    <property type="term" value="P:regulation of protein localization"/>
    <property type="evidence" value="ECO:0000250"/>
    <property type="project" value="UniProtKB"/>
</dbReference>
<dbReference type="GO" id="GO:0031297">
    <property type="term" value="P:replication fork processing"/>
    <property type="evidence" value="ECO:0000250"/>
    <property type="project" value="UniProtKB"/>
</dbReference>
<dbReference type="CDD" id="cd12795">
    <property type="entry name" value="FILIA_N_like"/>
    <property type="match status" value="1"/>
</dbReference>
<dbReference type="FunFam" id="3.30.1370.10:FF:000086">
    <property type="entry name" value="Oocyte-expressed protein homolog"/>
    <property type="match status" value="1"/>
</dbReference>
<dbReference type="Gene3D" id="3.30.1370.10">
    <property type="entry name" value="K Homology domain, type 1"/>
    <property type="match status" value="1"/>
</dbReference>
<dbReference type="InterPro" id="IPR036612">
    <property type="entry name" value="KH_dom_type_1_sf"/>
</dbReference>
<dbReference type="InterPro" id="IPR051778">
    <property type="entry name" value="KHDC1"/>
</dbReference>
<dbReference type="InterPro" id="IPR031952">
    <property type="entry name" value="MOEP19_KH-like"/>
</dbReference>
<dbReference type="PANTHER" id="PTHR19447:SF14">
    <property type="entry name" value="OOCYTE-EXPRESSED PROTEIN HOMOLOG"/>
    <property type="match status" value="1"/>
</dbReference>
<dbReference type="PANTHER" id="PTHR19447">
    <property type="entry name" value="OOCYTE-EXPRESSED PROTEIN HOMOLOG-RELATED"/>
    <property type="match status" value="1"/>
</dbReference>
<dbReference type="Pfam" id="PF16005">
    <property type="entry name" value="MOEP19"/>
    <property type="match status" value="1"/>
</dbReference>
<keyword id="KW-0963">Cytoplasm</keyword>
<keyword id="KW-0539">Nucleus</keyword>
<keyword id="KW-1185">Reference proteome</keyword>
<sequence>MVDDAGAAEVLGDEWRPAWSLDRLLRAPLPPPRIRTRPWWFPVQELRDPLVFYLEAWLADAIFGPDRAIIPEIEWMSQVLLTVDVVNSGDLVEISIFGWPRVQNRVKSVLLSLASWHRKHRARAEKMKQLEEFLKTGGTGPQTPEHPVA</sequence>
<protein>
    <recommendedName>
        <fullName>Oocyte-expressed protein</fullName>
    </recommendedName>
    <alternativeName>
        <fullName>Oocyte- and embryo-specific protein 19</fullName>
        <shortName>dOEP19</shortName>
    </alternativeName>
</protein>
<accession>Q0ZFW8</accession>
<name>OOEP_CANLF</name>
<feature type="chain" id="PRO_0000328800" description="Oocyte-expressed protein">
    <location>
        <begin position="1"/>
        <end position="149"/>
    </location>
</feature>
<feature type="domain" description="KH; atypical">
    <location>
        <begin position="49"/>
        <end position="110"/>
    </location>
</feature>
<proteinExistence type="evidence at transcript level"/>
<reference key="1">
    <citation type="submission" date="2006-03" db="EMBL/GenBank/DDBJ databases">
        <title>Cloning the orthologous gene of moep 19 in dog.</title>
        <authorList>
            <person name="He W."/>
            <person name="Li Y."/>
            <person name="Chertihin O."/>
            <person name="Herr J.C."/>
        </authorList>
    </citation>
    <scope>NUCLEOTIDE SEQUENCE [MRNA]</scope>
    <source>
        <tissue>Oocyte</tissue>
    </source>
</reference>
<evidence type="ECO:0000250" key="1">
    <source>
        <dbReference type="UniProtKB" id="A6NGQ2"/>
    </source>
</evidence>
<evidence type="ECO:0000250" key="2">
    <source>
        <dbReference type="UniProtKB" id="Q9CWE6"/>
    </source>
</evidence>
<evidence type="ECO:0000305" key="3"/>